<accession>Q1GWT3</accession>
<comment type="similarity">
    <text evidence="1">Belongs to the UPF0301 (AlgH) family.</text>
</comment>
<comment type="sequence caution" evidence="2">
    <conflict type="erroneous initiation">
        <sequence resource="EMBL-CDS" id="ABF51889"/>
    </conflict>
</comment>
<dbReference type="EMBL" id="CP000356">
    <property type="protein sequence ID" value="ABF51889.1"/>
    <property type="status" value="ALT_INIT"/>
    <property type="molecule type" value="Genomic_DNA"/>
</dbReference>
<dbReference type="RefSeq" id="WP_041382909.1">
    <property type="nucleotide sequence ID" value="NC_008048.1"/>
</dbReference>
<dbReference type="SMR" id="Q1GWT3"/>
<dbReference type="STRING" id="317655.Sala_0165"/>
<dbReference type="KEGG" id="sal:Sala_0165"/>
<dbReference type="eggNOG" id="COG1678">
    <property type="taxonomic scope" value="Bacteria"/>
</dbReference>
<dbReference type="HOGENOM" id="CLU_057596_1_0_5"/>
<dbReference type="OrthoDB" id="9807486at2"/>
<dbReference type="Proteomes" id="UP000006578">
    <property type="component" value="Chromosome"/>
</dbReference>
<dbReference type="GO" id="GO:0005829">
    <property type="term" value="C:cytosol"/>
    <property type="evidence" value="ECO:0007669"/>
    <property type="project" value="TreeGrafter"/>
</dbReference>
<dbReference type="Gene3D" id="3.40.1740.10">
    <property type="entry name" value="VC0467-like"/>
    <property type="match status" value="1"/>
</dbReference>
<dbReference type="HAMAP" id="MF_00758">
    <property type="entry name" value="UPF0301"/>
    <property type="match status" value="1"/>
</dbReference>
<dbReference type="InterPro" id="IPR003774">
    <property type="entry name" value="AlgH-like"/>
</dbReference>
<dbReference type="PANTHER" id="PTHR30327">
    <property type="entry name" value="UNCHARACTERIZED PROTEIN YQGE"/>
    <property type="match status" value="1"/>
</dbReference>
<dbReference type="PANTHER" id="PTHR30327:SF1">
    <property type="entry name" value="UPF0301 PROTEIN YQGE"/>
    <property type="match status" value="1"/>
</dbReference>
<dbReference type="Pfam" id="PF02622">
    <property type="entry name" value="DUF179"/>
    <property type="match status" value="1"/>
</dbReference>
<dbReference type="SUPFAM" id="SSF143456">
    <property type="entry name" value="VC0467-like"/>
    <property type="match status" value="1"/>
</dbReference>
<protein>
    <recommendedName>
        <fullName evidence="1">UPF0301 protein Sala_0165</fullName>
    </recommendedName>
</protein>
<sequence length="187" mass="19911">MDTAPTWFTGQLLLALPGIGDPRFEHSVIAMISHDEDGAMGIGIADPIEGMTVGAVLDQLGIEHEAPLDQPVYLGGPVEPSRGFVLHSRDWGGEGAVLVADRWMVSSSHDILRAIGEGRGPSRWLVALGYAGWSPGQLEGEMVRHGWHVTPGSDALLFDTPPARRWQAAFAEAGVDARLLTTKGGEA</sequence>
<gene>
    <name type="ordered locus">Sala_0165</name>
</gene>
<reference key="1">
    <citation type="journal article" date="2009" name="Proc. Natl. Acad. Sci. U.S.A.">
        <title>The genomic basis of trophic strategy in marine bacteria.</title>
        <authorList>
            <person name="Lauro F.M."/>
            <person name="McDougald D."/>
            <person name="Thomas T."/>
            <person name="Williams T.J."/>
            <person name="Egan S."/>
            <person name="Rice S."/>
            <person name="DeMaere M.Z."/>
            <person name="Ting L."/>
            <person name="Ertan H."/>
            <person name="Johnson J."/>
            <person name="Ferriera S."/>
            <person name="Lapidus A."/>
            <person name="Anderson I."/>
            <person name="Kyrpides N."/>
            <person name="Munk A.C."/>
            <person name="Detter C."/>
            <person name="Han C.S."/>
            <person name="Brown M.V."/>
            <person name="Robb F.T."/>
            <person name="Kjelleberg S."/>
            <person name="Cavicchioli R."/>
        </authorList>
    </citation>
    <scope>NUCLEOTIDE SEQUENCE [LARGE SCALE GENOMIC DNA]</scope>
    <source>
        <strain>DSM 13593 / LMG 18877 / RB2256</strain>
    </source>
</reference>
<organism>
    <name type="scientific">Sphingopyxis alaskensis (strain DSM 13593 / LMG 18877 / RB2256)</name>
    <name type="common">Sphingomonas alaskensis</name>
    <dbReference type="NCBI Taxonomy" id="317655"/>
    <lineage>
        <taxon>Bacteria</taxon>
        <taxon>Pseudomonadati</taxon>
        <taxon>Pseudomonadota</taxon>
        <taxon>Alphaproteobacteria</taxon>
        <taxon>Sphingomonadales</taxon>
        <taxon>Sphingomonadaceae</taxon>
        <taxon>Sphingopyxis</taxon>
    </lineage>
</organism>
<proteinExistence type="inferred from homology"/>
<evidence type="ECO:0000255" key="1">
    <source>
        <dbReference type="HAMAP-Rule" id="MF_00758"/>
    </source>
</evidence>
<evidence type="ECO:0000305" key="2"/>
<keyword id="KW-1185">Reference proteome</keyword>
<feature type="chain" id="PRO_0000258886" description="UPF0301 protein Sala_0165">
    <location>
        <begin position="1"/>
        <end position="187"/>
    </location>
</feature>
<name>Y165_SPHAL</name>